<keyword id="KW-0007">Acetylation</keyword>
<keyword id="KW-1003">Cell membrane</keyword>
<keyword id="KW-0966">Cell projection</keyword>
<keyword id="KW-0963">Cytoplasm</keyword>
<keyword id="KW-0206">Cytoskeleton</keyword>
<keyword id="KW-1017">Isopeptide bond</keyword>
<keyword id="KW-0472">Membrane</keyword>
<keyword id="KW-0488">Methylation</keyword>
<keyword id="KW-0493">Microtubule</keyword>
<keyword id="KW-0597">Phosphoprotein</keyword>
<keyword id="KW-0677">Repeat</keyword>
<keyword id="KW-0832">Ubl conjugation</keyword>
<gene>
    <name type="primary">MAPT</name>
</gene>
<proteinExistence type="inferred from homology"/>
<sequence>MAEPRQEFDVMEDHAGTYGLGDRKDQGGYTMLQDQEGDTDAGLKESPLQTPAEDGSEEPGSETSDAKSTPTAEDVTAPLVDEGAPXKQAAAQPHTEIPEGTTAEEAGIGDTPSLEDEAAGHVTQEPESGKVVREGFLGEPGPRSXSHQLASGMPGAPLLPEGPREATRQPSGTGPEDTEGGRHAPELLKHQLLGDLHQEGPPLKRAGGKERPGIKEEVDEDRDVDESSPQDSPPSKVSPAHDGRPPQTAAREATSIPGFPAEGAIPLPVDFLSKVSTEIPASEPDGPSAGRAEGQDAPPEFTFHVEITPNVQKEQAHSEEHLGRAAFPGAPGEGPEAQGPSLGEDTKEADLPEPSEKQPAAAPRGKPISRVPQLKARMVSKSKDGTGSDDKKAKTSTRSSAKTLKNRPCLSPKHPTPGSSDPLIQPSSPAVCPEPPSSPKYVSSVTXRTGSSGAKEMKLKGADGKTKIATPRGAAPPGQKGQANATRIPAKTPPAPKTPPSSVTKQVQRRPPPAGPKSERGEPPKSGDRSGYSSPGSPGTPGSRSRTPSLPTPPTREPKKVAVVRTPPKSPSSAKSRLQTAPVPMPDLKNVKSKIGSTENLKHQPGGGKVQIINKKLDLSNVQSKCGSKDNIKHVPGGGSVQIVYKPVDLSKVTSKCGSLGNIHHKPGGGQVEVKSEKLDFKDRVQSKIGSLDNITHVPGGGNKKIETHKLTFRENAKAKTDHGAEIVYKSPVVSGDTSPRHLSNVSSTGSIDMVDSPQLATLADEVSASLAKQGL</sequence>
<protein>
    <recommendedName>
        <fullName>Microtubule-associated protein tau</fullName>
    </recommendedName>
</protein>
<dbReference type="EMBL" id="AY574163">
    <property type="protein sequence ID" value="AAS91775.2"/>
    <property type="molecule type" value="Genomic_DNA"/>
</dbReference>
<dbReference type="EMBL" id="AY574154">
    <property type="protein sequence ID" value="AAS91775.2"/>
    <property type="status" value="JOINED"/>
    <property type="molecule type" value="Genomic_DNA"/>
</dbReference>
<dbReference type="EMBL" id="AY574155">
    <property type="protein sequence ID" value="AAS91775.2"/>
    <property type="status" value="JOINED"/>
    <property type="molecule type" value="Genomic_DNA"/>
</dbReference>
<dbReference type="EMBL" id="AY574156">
    <property type="protein sequence ID" value="AAS91775.2"/>
    <property type="status" value="JOINED"/>
    <property type="molecule type" value="Genomic_DNA"/>
</dbReference>
<dbReference type="EMBL" id="AY574157">
    <property type="protein sequence ID" value="AAS91775.2"/>
    <property type="status" value="JOINED"/>
    <property type="molecule type" value="Genomic_DNA"/>
</dbReference>
<dbReference type="EMBL" id="AY574158">
    <property type="protein sequence ID" value="AAS91775.2"/>
    <property type="status" value="JOINED"/>
    <property type="molecule type" value="Genomic_DNA"/>
</dbReference>
<dbReference type="EMBL" id="AY574159">
    <property type="protein sequence ID" value="AAS91775.2"/>
    <property type="status" value="JOINED"/>
    <property type="molecule type" value="Genomic_DNA"/>
</dbReference>
<dbReference type="EMBL" id="AY574160">
    <property type="protein sequence ID" value="AAS91775.2"/>
    <property type="status" value="JOINED"/>
    <property type="molecule type" value="Genomic_DNA"/>
</dbReference>
<dbReference type="EMBL" id="AY574161">
    <property type="protein sequence ID" value="AAS91775.2"/>
    <property type="status" value="JOINED"/>
    <property type="molecule type" value="Genomic_DNA"/>
</dbReference>
<dbReference type="EMBL" id="AY574162">
    <property type="protein sequence ID" value="AAS91775.2"/>
    <property type="status" value="JOINED"/>
    <property type="molecule type" value="Genomic_DNA"/>
</dbReference>
<dbReference type="EMBL" id="AY574150">
    <property type="protein sequence ID" value="AAS91775.2"/>
    <property type="status" value="JOINED"/>
    <property type="molecule type" value="Genomic_DNA"/>
</dbReference>
<dbReference type="EMBL" id="AY574151">
    <property type="protein sequence ID" value="AAS91775.2"/>
    <property type="status" value="JOINED"/>
    <property type="molecule type" value="Genomic_DNA"/>
</dbReference>
<dbReference type="EMBL" id="AY574152">
    <property type="protein sequence ID" value="AAS91775.2"/>
    <property type="status" value="JOINED"/>
    <property type="molecule type" value="Genomic_DNA"/>
</dbReference>
<dbReference type="EMBL" id="AY574153">
    <property type="protein sequence ID" value="AAS91775.2"/>
    <property type="status" value="JOINED"/>
    <property type="molecule type" value="Genomic_DNA"/>
</dbReference>
<dbReference type="BMRB" id="Q5YCV9"/>
<dbReference type="GO" id="GO:0030424">
    <property type="term" value="C:axon"/>
    <property type="evidence" value="ECO:0000250"/>
    <property type="project" value="UniProtKB"/>
</dbReference>
<dbReference type="GO" id="GO:0005737">
    <property type="term" value="C:cytoplasm"/>
    <property type="evidence" value="ECO:0000250"/>
    <property type="project" value="UniProtKB"/>
</dbReference>
<dbReference type="GO" id="GO:0005829">
    <property type="term" value="C:cytosol"/>
    <property type="evidence" value="ECO:0007669"/>
    <property type="project" value="UniProtKB-SubCell"/>
</dbReference>
<dbReference type="GO" id="GO:0030425">
    <property type="term" value="C:dendrite"/>
    <property type="evidence" value="ECO:0000250"/>
    <property type="project" value="UniProtKB"/>
</dbReference>
<dbReference type="GO" id="GO:0030426">
    <property type="term" value="C:growth cone"/>
    <property type="evidence" value="ECO:0000250"/>
    <property type="project" value="UniProtKB"/>
</dbReference>
<dbReference type="GO" id="GO:0005874">
    <property type="term" value="C:microtubule"/>
    <property type="evidence" value="ECO:0007669"/>
    <property type="project" value="UniProtKB-KW"/>
</dbReference>
<dbReference type="GO" id="GO:0005886">
    <property type="term" value="C:plasma membrane"/>
    <property type="evidence" value="ECO:0000250"/>
    <property type="project" value="UniProtKB"/>
</dbReference>
<dbReference type="GO" id="GO:0045298">
    <property type="term" value="C:tubulin complex"/>
    <property type="evidence" value="ECO:0000250"/>
    <property type="project" value="UniProtKB"/>
</dbReference>
<dbReference type="GO" id="GO:0008017">
    <property type="term" value="F:microtubule binding"/>
    <property type="evidence" value="ECO:0000250"/>
    <property type="project" value="UniProtKB"/>
</dbReference>
<dbReference type="GO" id="GO:0000226">
    <property type="term" value="P:microtubule cytoskeleton organization"/>
    <property type="evidence" value="ECO:0000250"/>
    <property type="project" value="UniProtKB"/>
</dbReference>
<dbReference type="GO" id="GO:0031175">
    <property type="term" value="P:neuron projection development"/>
    <property type="evidence" value="ECO:0007669"/>
    <property type="project" value="TreeGrafter"/>
</dbReference>
<dbReference type="GO" id="GO:0045773">
    <property type="term" value="P:positive regulation of axon extension"/>
    <property type="evidence" value="ECO:0000250"/>
    <property type="project" value="UniProtKB"/>
</dbReference>
<dbReference type="GO" id="GO:0031116">
    <property type="term" value="P:positive regulation of microtubule polymerization"/>
    <property type="evidence" value="ECO:0000250"/>
    <property type="project" value="UniProtKB"/>
</dbReference>
<dbReference type="InterPro" id="IPR027324">
    <property type="entry name" value="MAP2/MAP4/Tau"/>
</dbReference>
<dbReference type="InterPro" id="IPR001084">
    <property type="entry name" value="MAP_tubulin-bd_rpt"/>
</dbReference>
<dbReference type="InterPro" id="IPR002955">
    <property type="entry name" value="Tau"/>
</dbReference>
<dbReference type="PANTHER" id="PTHR11501">
    <property type="entry name" value="MICROTUBULE-ASSOCIATED PROTEIN"/>
    <property type="match status" value="1"/>
</dbReference>
<dbReference type="PANTHER" id="PTHR11501:SF14">
    <property type="entry name" value="MICROTUBULE-ASSOCIATED PROTEIN TAU"/>
    <property type="match status" value="1"/>
</dbReference>
<dbReference type="Pfam" id="PF00418">
    <property type="entry name" value="Tubulin-binding"/>
    <property type="match status" value="4"/>
</dbReference>
<dbReference type="PRINTS" id="PR01261">
    <property type="entry name" value="TAUPROTEIN"/>
</dbReference>
<dbReference type="PROSITE" id="PS00229">
    <property type="entry name" value="TAU_MAP_1"/>
    <property type="match status" value="4"/>
</dbReference>
<dbReference type="PROSITE" id="PS51491">
    <property type="entry name" value="TAU_MAP_2"/>
    <property type="match status" value="4"/>
</dbReference>
<comment type="function">
    <text evidence="1">Promotes microtubule assembly and stability, and might be involved in the establishment and maintenance of neuronal polarity. The C-terminus binds axonal microtubules while the N-terminus binds neural plasma membrane components, suggesting that tau functions as a linker protein between both. Axonal polarity is predetermined by tau localization (in the neuronal cell) in the domain of the cell body defined by the centrosome. The short isoforms allow plasticity of the cytoskeleton whereas the longer isoforms may preferentially play a role in its stabilization (By similarity).</text>
</comment>
<comment type="subunit">
    <text evidence="2 3 4">Interacts with MARK1, MARK2, MARK3 and MARK4 (By similarity). Interacts with SQSTM1 when polyubiquitinated (By similarity). Interacts with PSMC2 through SQSTM1 (By similarity). Interacts with FKBP4 (By similarity). Binds to CSNK1D (By similarity). Interacts with SGK1 (By similarity). Interacts with EPM2A; the interaction dephosphorylates MAPT at Ser-396 (By similarity). Interacts with PIN1 (By similarity). Interacts with LRRK2 (By similarity). Interacts with LRP1, leading to endocytosis; this interaction is reduced in the presence of LRPAP1/RAP (By similarity).</text>
</comment>
<comment type="subcellular location">
    <subcellularLocation>
        <location evidence="2">Cytoplasm</location>
        <location evidence="2">Cytosol</location>
    </subcellularLocation>
    <subcellularLocation>
        <location evidence="2">Cell membrane</location>
        <topology evidence="2">Peripheral membrane protein</topology>
        <orientation evidence="2">Cytoplasmic side</orientation>
    </subcellularLocation>
    <subcellularLocation>
        <location evidence="2">Cytoplasm</location>
        <location evidence="2">Cytoskeleton</location>
    </subcellularLocation>
    <subcellularLocation>
        <location evidence="2">Cell projection</location>
        <location evidence="2">Axon</location>
    </subcellularLocation>
    <subcellularLocation>
        <location evidence="2">Cell projection</location>
        <location evidence="2">Dendrite</location>
    </subcellularLocation>
    <text evidence="2">Mostly found in the axons of neurons, in the cytosol and in association with plasma membrane components.</text>
</comment>
<comment type="domain">
    <text evidence="1">The tau/MAP repeat binds to tubulin.</text>
</comment>
<comment type="PTM">
    <text evidence="1">Polyubiquitinated. Requires functional TRAF6 and may provoke SQSTM1-dependent degradation by the proteasome (By similarity).</text>
</comment>
<comment type="PTM">
    <text evidence="1 2">Phosphorylation at various serine and threonine residues in S-P or T-P motifs by proline-directed protein kinases (PDPK1, CDK1, CDK5, GSK3, MAPK) (a few sites per protein in interphase, more in mitosis), and at serine residues in K-X-G-S motifs by MAP/microtubule affinity-regulating kinase (MARK1, MARK2, MARK3 or MARK4), causing detachment from microtubules, and their disassembly (By similarity). Phosphorylation at Ser-597 by BRSK1 and BRSK2 in neurons affects ability to bind microtubules and plays a role in neuron polarization. Phosphorylated by PHK. Dephosphorylation at several serine and threonine residues by the serine/threonine phosphatase PPP5C (By similarity).</text>
</comment>
<reference key="1">
    <citation type="journal article" date="2004" name="Gene">
        <title>Tau gene (MAPT) sequence variation among primates.</title>
        <authorList>
            <person name="Holzer M."/>
            <person name="Craxton M."/>
            <person name="Jakes R."/>
            <person name="Arendt T."/>
            <person name="Goedert M."/>
        </authorList>
    </citation>
    <scope>NUCLEOTIDE SEQUENCE [GENOMIC DNA]</scope>
</reference>
<accession>Q5YCV9</accession>
<feature type="initiator methionine" description="Removed" evidence="2">
    <location>
        <position position="1"/>
    </location>
</feature>
<feature type="chain" id="PRO_0000072740" description="Microtubule-associated protein tau">
    <location>
        <begin position="2"/>
        <end position="776"/>
    </location>
</feature>
<feature type="repeat" description="Tau/MAP 1" evidence="5">
    <location>
        <begin position="579"/>
        <end position="609"/>
    </location>
</feature>
<feature type="repeat" description="Tau/MAP 2" evidence="5">
    <location>
        <begin position="610"/>
        <end position="640"/>
    </location>
</feature>
<feature type="repeat" description="Tau/MAP 3" evidence="5">
    <location>
        <begin position="641"/>
        <end position="671"/>
    </location>
</feature>
<feature type="repeat" description="Tau/MAP 4" evidence="5">
    <location>
        <begin position="672"/>
        <end position="703"/>
    </location>
</feature>
<feature type="region of interest" description="Disordered" evidence="6">
    <location>
        <begin position="1"/>
        <end position="591"/>
    </location>
</feature>
<feature type="region of interest" description="Disordered" evidence="6">
    <location>
        <begin position="733"/>
        <end position="752"/>
    </location>
</feature>
<feature type="compositionally biased region" description="Basic and acidic residues" evidence="6">
    <location>
        <begin position="1"/>
        <end position="26"/>
    </location>
</feature>
<feature type="compositionally biased region" description="Polar residues" evidence="6">
    <location>
        <begin position="61"/>
        <end position="71"/>
    </location>
</feature>
<feature type="compositionally biased region" description="Basic and acidic residues" evidence="6">
    <location>
        <begin position="179"/>
        <end position="189"/>
    </location>
</feature>
<feature type="compositionally biased region" description="Basic and acidic residues" evidence="6">
    <location>
        <begin position="207"/>
        <end position="216"/>
    </location>
</feature>
<feature type="compositionally biased region" description="Acidic residues" evidence="6">
    <location>
        <begin position="217"/>
        <end position="228"/>
    </location>
</feature>
<feature type="compositionally biased region" description="Basic and acidic residues" evidence="6">
    <location>
        <begin position="314"/>
        <end position="323"/>
    </location>
</feature>
<feature type="compositionally biased region" description="Low complexity" evidence="6">
    <location>
        <begin position="325"/>
        <end position="340"/>
    </location>
</feature>
<feature type="compositionally biased region" description="Basic and acidic residues" evidence="6">
    <location>
        <begin position="344"/>
        <end position="356"/>
    </location>
</feature>
<feature type="compositionally biased region" description="Basic and acidic residues" evidence="6">
    <location>
        <begin position="381"/>
        <end position="393"/>
    </location>
</feature>
<feature type="compositionally biased region" description="Low complexity" evidence="6">
    <location>
        <begin position="442"/>
        <end position="453"/>
    </location>
</feature>
<feature type="compositionally biased region" description="Basic and acidic residues" evidence="6">
    <location>
        <begin position="455"/>
        <end position="466"/>
    </location>
</feature>
<feature type="compositionally biased region" description="Basic and acidic residues" evidence="6">
    <location>
        <begin position="517"/>
        <end position="528"/>
    </location>
</feature>
<feature type="compositionally biased region" description="Low complexity" evidence="6">
    <location>
        <begin position="529"/>
        <end position="549"/>
    </location>
</feature>
<feature type="compositionally biased region" description="Polar residues" evidence="6">
    <location>
        <begin position="736"/>
        <end position="751"/>
    </location>
</feature>
<feature type="modified residue" description="N-acetylalanine" evidence="2">
    <location>
        <position position="2"/>
    </location>
</feature>
<feature type="modified residue" description="Phosphotyrosine" evidence="2">
    <location>
        <position position="18"/>
    </location>
</feature>
<feature type="modified residue" description="Phosphotyrosine" evidence="3">
    <location>
        <position position="29"/>
    </location>
</feature>
<feature type="modified residue" description="Phosphoserine" evidence="4">
    <location>
        <position position="46"/>
    </location>
</feature>
<feature type="modified residue" description="Phosphoserine" evidence="4">
    <location>
        <position position="61"/>
    </location>
</feature>
<feature type="modified residue" description="Phosphothreonine" evidence="3">
    <location>
        <position position="69"/>
    </location>
</feature>
<feature type="modified residue" description="Phosphothreonine" evidence="4">
    <location>
        <position position="71"/>
    </location>
</feature>
<feature type="modified residue" description="Phosphothreonine" evidence="3">
    <location>
        <position position="111"/>
    </location>
</feature>
<feature type="modified residue" description="Phosphothreonine" evidence="2">
    <location>
        <position position="470"/>
    </location>
</feature>
<feature type="modified residue" description="Omega-N-methylarginine" evidence="3">
    <location>
        <position position="472"/>
    </location>
</feature>
<feature type="modified residue" description="N6,N6-dimethyllysine; alternate" evidence="3">
    <location>
        <position position="480"/>
    </location>
</feature>
<feature type="modified residue" description="N6-acetyllysine; alternate" evidence="3">
    <location>
        <position position="480"/>
    </location>
</feature>
<feature type="modified residue" description="Phosphothreonine" evidence="3">
    <location>
        <position position="486"/>
    </location>
</feature>
<feature type="modified residue" description="Phosphothreonine" evidence="3">
    <location>
        <position position="492"/>
    </location>
</feature>
<feature type="modified residue" description="Phosphothreonine" evidence="2">
    <location>
        <position position="498"/>
    </location>
</feature>
<feature type="modified residue" description="Phosphoserine" evidence="3">
    <location>
        <position position="502"/>
    </location>
</feature>
<feature type="modified residue" description="Phosphoserine" evidence="3">
    <location>
        <position position="526"/>
    </location>
</feature>
<feature type="modified residue" description="Phosphoserine" evidence="3">
    <location>
        <position position="530"/>
    </location>
</feature>
<feature type="modified residue" description="Phosphotyrosine" evidence="2">
    <location>
        <position position="532"/>
    </location>
</feature>
<feature type="modified residue" description="Phosphoserine" evidence="2">
    <location>
        <position position="533"/>
    </location>
</feature>
<feature type="modified residue" description="Phosphoserine" evidence="2">
    <location>
        <position position="534"/>
    </location>
</feature>
<feature type="modified residue" description="Phosphoserine" evidence="2">
    <location>
        <position position="537"/>
    </location>
</feature>
<feature type="modified residue" description="Phosphothreonine" evidence="2">
    <location>
        <position position="540"/>
    </location>
</feature>
<feature type="modified residue" description="Phosphothreonine" evidence="2">
    <location>
        <position position="547"/>
    </location>
</feature>
<feature type="modified residue" description="Phosphoserine" evidence="2">
    <location>
        <position position="549"/>
    </location>
</feature>
<feature type="modified residue" description="Phosphothreonine" evidence="2">
    <location>
        <position position="552"/>
    </location>
</feature>
<feature type="modified residue" description="N6-acetyllysine" evidence="3">
    <location>
        <position position="560"/>
    </location>
</feature>
<feature type="modified residue" description="Phosphothreonine" evidence="2">
    <location>
        <position position="566"/>
    </location>
</feature>
<feature type="modified residue" description="Phosphoserine" evidence="2">
    <location>
        <position position="570"/>
    </location>
</feature>
<feature type="modified residue" description="Phosphoserine" evidence="2">
    <location>
        <position position="572"/>
    </location>
</feature>
<feature type="modified residue" description="N6-acetyllysine; alternate" evidence="3">
    <location>
        <position position="594"/>
    </location>
</feature>
<feature type="modified residue" description="N6-methyllysine; alternate" evidence="3">
    <location>
        <position position="594"/>
    </location>
</feature>
<feature type="modified residue" description="Phosphoserine" evidence="2">
    <location>
        <position position="597"/>
    </location>
</feature>
<feature type="modified residue" description="N6-acetyllysine; alternate" evidence="3">
    <location>
        <position position="616"/>
    </location>
</feature>
<feature type="modified residue" description="Phosphoserine" evidence="2">
    <location>
        <position position="620"/>
    </location>
</feature>
<feature type="modified residue" description="Phosphoserine" evidence="2">
    <location>
        <position position="624"/>
    </location>
</feature>
<feature type="modified residue" description="N6-acetyllysine" evidence="3">
    <location>
        <position position="625"/>
    </location>
</feature>
<feature type="modified residue" description="Phosphoserine" evidence="2">
    <location>
        <position position="628"/>
    </location>
</feature>
<feature type="modified residue" description="N6-acetyllysine; alternate" evidence="3">
    <location>
        <position position="633"/>
    </location>
</feature>
<feature type="modified residue" description="Phosphoserine" evidence="2">
    <location>
        <position position="640"/>
    </location>
</feature>
<feature type="modified residue" description="N6,N6-dimethyllysine; alternate" evidence="3">
    <location>
        <position position="646"/>
    </location>
</feature>
<feature type="modified residue" description="N6-acetyllysine; alternate" evidence="3">
    <location>
        <position position="646"/>
    </location>
</feature>
<feature type="modified residue" description="N6-acetyllysine; alternate" evidence="3">
    <location>
        <position position="652"/>
    </location>
</feature>
<feature type="modified residue" description="N6-acetyllysine; alternate" evidence="3">
    <location>
        <position position="656"/>
    </location>
</feature>
<feature type="modified residue" description="Phosphoserine" evidence="2">
    <location>
        <position position="659"/>
    </location>
</feature>
<feature type="modified residue" description="N6-acetyllysine; alternate" evidence="3">
    <location>
        <position position="666"/>
    </location>
</feature>
<feature type="modified residue" description="N6-acetyllysine; alternate" evidence="3">
    <location>
        <position position="678"/>
    </location>
</feature>
<feature type="modified residue" description="N6-acetyllysine; alternate" evidence="3">
    <location>
        <position position="682"/>
    </location>
</feature>
<feature type="modified residue" description="Omega-N-methylarginine" evidence="3">
    <location>
        <position position="684"/>
    </location>
</feature>
<feature type="modified residue" description="Phosphoserine" evidence="2">
    <location>
        <position position="687"/>
    </location>
</feature>
<feature type="modified residue" description="Phosphoserine" evidence="2">
    <location>
        <position position="691"/>
    </location>
</feature>
<feature type="modified residue" description="N6-acetyllysine; alternate" evidence="3">
    <location>
        <position position="704"/>
    </location>
</feature>
<feature type="modified residue" description="N6-acetyllysine; alternate" evidence="3">
    <location>
        <position position="720"/>
    </location>
</feature>
<feature type="modified residue" description="Phosphotyrosine" evidence="3">
    <location>
        <position position="729"/>
    </location>
</feature>
<feature type="modified residue" description="Phosphoserine" evidence="2">
    <location>
        <position position="731"/>
    </location>
</feature>
<feature type="modified residue" description="Phosphoserine" evidence="2">
    <location>
        <position position="735"/>
    </location>
</feature>
<feature type="modified residue" description="Phosphothreonine" evidence="3">
    <location>
        <position position="738"/>
    </location>
</feature>
<feature type="modified residue" description="Phosphoserine" evidence="2">
    <location>
        <position position="739"/>
    </location>
</feature>
<feature type="modified residue" description="Phosphoserine" evidence="2">
    <location>
        <position position="744"/>
    </location>
</feature>
<feature type="modified residue" description="Phosphoserine" evidence="2">
    <location>
        <position position="751"/>
    </location>
</feature>
<feature type="modified residue" description="Phosphoserine" evidence="2">
    <location>
        <position position="757"/>
    </location>
</feature>
<feature type="modified residue" description="Phosphothreonine" evidence="2">
    <location>
        <position position="762"/>
    </location>
</feature>
<feature type="cross-link" description="Glycyl lysine isopeptide (Lys-Gly) (interchain with G-Cter in ubiquitin)" evidence="3">
    <location>
        <position position="44"/>
    </location>
</feature>
<feature type="cross-link" description="Glycyl lysine isopeptide (Lys-Gly) (interchain with G-Cter in ubiquitin)" evidence="2">
    <location>
        <position position="589"/>
    </location>
</feature>
<feature type="cross-link" description="Glycyl lysine isopeptide (Lys-Gly) (interchain with G-Cter in ubiquitin); alternate" evidence="3">
    <location>
        <position position="594"/>
    </location>
</feature>
<feature type="cross-link" description="Glycyl lysine isopeptide (Lys-Gly) (interchain with G-Cter in ubiquitin)" evidence="3">
    <location>
        <position position="602"/>
    </location>
</feature>
<feature type="cross-link" description="Glycyl lysine isopeptide (Lys-Gly) (interchain with G-Cter in ubiquitin); alternate" evidence="3">
    <location>
        <position position="616"/>
    </location>
</feature>
<feature type="cross-link" description="Glycyl lysine isopeptide (Lys-Gly) (interchain with G-Cter in ubiquitin); alternate" evidence="3">
    <location>
        <position position="633"/>
    </location>
</feature>
<feature type="cross-link" description="Glycyl lysine isopeptide (Lys-Gly) (interchain with G-Cter in ubiquitin); alternate" evidence="2">
    <location>
        <position position="646"/>
    </location>
</feature>
<feature type="cross-link" description="Glycyl lysine isopeptide (Lys-Gly) (interchain with G-Cter in ubiquitin); alternate" evidence="3">
    <location>
        <position position="652"/>
    </location>
</feature>
<feature type="cross-link" description="Glycyl lysine isopeptide (Lys-Gly) (interchain with G-Cter in ubiquitin); alternate" evidence="3">
    <location>
        <position position="656"/>
    </location>
</feature>
<feature type="cross-link" description="Glycyl lysine isopeptide (Lys-Gly) (interchain with G-Cter in ubiquitin); alternate" evidence="3">
    <location>
        <position position="666"/>
    </location>
</feature>
<feature type="cross-link" description="Glycyl lysine isopeptide (Lys-Gly) (interchain with G-Cter in ubiquitin); alternate" evidence="3">
    <location>
        <position position="678"/>
    </location>
</feature>
<feature type="cross-link" description="Glycyl lysine isopeptide (Lys-Gly) (interchain with G-Cter in ubiquitin); alternate" evidence="3">
    <location>
        <position position="682"/>
    </location>
</feature>
<feature type="cross-link" description="Glycyl lysine isopeptide (Lys-Gly) (interchain with G-Cter in ubiquitin)" evidence="2">
    <location>
        <position position="688"/>
    </location>
</feature>
<feature type="cross-link" description="Glycyl lysine isopeptide (Lys-Gly) (interchain with G-Cter in ubiquitin); alternate" evidence="3">
    <location>
        <position position="704"/>
    </location>
</feature>
<feature type="cross-link" description="Glycyl lysine isopeptide (Lys-Gly) (interchain with G-Cter in ubiquitin)" evidence="3">
    <location>
        <position position="710"/>
    </location>
</feature>
<feature type="cross-link" description="Glycyl lysine isopeptide (Lys-Gly) (interchain with G-Cter in ubiquitin); alternate" evidence="3">
    <location>
        <position position="720"/>
    </location>
</feature>
<organism>
    <name type="scientific">Hylobates lar</name>
    <name type="common">Lar gibbon</name>
    <name type="synonym">White-handed gibbon</name>
    <dbReference type="NCBI Taxonomy" id="9580"/>
    <lineage>
        <taxon>Eukaryota</taxon>
        <taxon>Metazoa</taxon>
        <taxon>Chordata</taxon>
        <taxon>Craniata</taxon>
        <taxon>Vertebrata</taxon>
        <taxon>Euteleostomi</taxon>
        <taxon>Mammalia</taxon>
        <taxon>Eutheria</taxon>
        <taxon>Euarchontoglires</taxon>
        <taxon>Primates</taxon>
        <taxon>Haplorrhini</taxon>
        <taxon>Catarrhini</taxon>
        <taxon>Hylobatidae</taxon>
        <taxon>Hylobates</taxon>
    </lineage>
</organism>
<evidence type="ECO:0000250" key="1"/>
<evidence type="ECO:0000250" key="2">
    <source>
        <dbReference type="UniProtKB" id="P10636"/>
    </source>
</evidence>
<evidence type="ECO:0000250" key="3">
    <source>
        <dbReference type="UniProtKB" id="P10637"/>
    </source>
</evidence>
<evidence type="ECO:0000250" key="4">
    <source>
        <dbReference type="UniProtKB" id="P19332"/>
    </source>
</evidence>
<evidence type="ECO:0000255" key="5">
    <source>
        <dbReference type="PROSITE-ProRule" id="PRU00824"/>
    </source>
</evidence>
<evidence type="ECO:0000256" key="6">
    <source>
        <dbReference type="SAM" id="MobiDB-lite"/>
    </source>
</evidence>
<name>TAU_HYLLA</name>